<comment type="function">
    <text evidence="2 3">In muscle, parvalbumin is thought to be involved in relaxation after contraction. It binds two calcium ions (By similarity).</text>
</comment>
<comment type="mass spectrometry"/>
<comment type="miscellaneous">
    <text evidence="2 6">Is regarded as an important allergen.</text>
</comment>
<comment type="miscellaneous">
    <text evidence="6">On the 2D-gel the determined pI of this protein is: 4.14, its MW is: 11.53 kDa.</text>
</comment>
<comment type="similarity">
    <text evidence="4">Belongs to the parvalbumin family.</text>
</comment>
<evidence type="ECO:0000250" key="1">
    <source>
        <dbReference type="UniProtKB" id="P02621"/>
    </source>
</evidence>
<evidence type="ECO:0000250" key="2">
    <source>
        <dbReference type="UniProtKB" id="P02622"/>
    </source>
</evidence>
<evidence type="ECO:0000250" key="3">
    <source>
        <dbReference type="UniProtKB" id="P02624"/>
    </source>
</evidence>
<evidence type="ECO:0000255" key="4"/>
<evidence type="ECO:0000255" key="5">
    <source>
        <dbReference type="PROSITE-ProRule" id="PRU00448"/>
    </source>
</evidence>
<evidence type="ECO:0000269" key="6">
    <source>
    </source>
</evidence>
<evidence type="ECO:0000303" key="7">
    <source>
    </source>
</evidence>
<evidence type="ECO:0000305" key="8"/>
<keyword id="KW-0007">Acetylation</keyword>
<keyword id="KW-0020">Allergen</keyword>
<keyword id="KW-0106">Calcium</keyword>
<keyword id="KW-0903">Direct protein sequencing</keyword>
<keyword id="KW-0479">Metal-binding</keyword>
<keyword id="KW-0514">Muscle protein</keyword>
<keyword id="KW-0677">Repeat</keyword>
<accession>P86748</accession>
<organism>
    <name type="scientific">Merluccius australis australis</name>
    <name type="common">Austral hake</name>
    <dbReference type="NCBI Taxonomy" id="307686"/>
    <lineage>
        <taxon>Eukaryota</taxon>
        <taxon>Metazoa</taxon>
        <taxon>Chordata</taxon>
        <taxon>Craniata</taxon>
        <taxon>Vertebrata</taxon>
        <taxon>Euteleostomi</taxon>
        <taxon>Actinopterygii</taxon>
        <taxon>Neopterygii</taxon>
        <taxon>Teleostei</taxon>
        <taxon>Neoteleostei</taxon>
        <taxon>Acanthomorphata</taxon>
        <taxon>Zeiogadaria</taxon>
        <taxon>Gadariae</taxon>
        <taxon>Gadiformes</taxon>
        <taxon>Gadoidei</taxon>
        <taxon>Merlucciidae</taxon>
        <taxon>Merluccius</taxon>
    </lineage>
</organism>
<sequence>AFSGILAEADIAAALKACEAADSFNYKAFFAKVGLSAKSADDIKKAFFVIDQDKSGFIEEDELKLFLQVFSAGARALTDAETKAFLKAGDSDGDGAIGVDEFAVLVKA</sequence>
<protein>
    <recommendedName>
        <fullName evidence="7">Parvalbumin beta 3</fullName>
    </recommendedName>
</protein>
<name>PRVB3_MERAA</name>
<reference evidence="8" key="1">
    <citation type="journal article" date="2010" name="J. Proteome Res.">
        <title>Extensive de novo sequencing of new parvalbumin isoforms using a novel combination of bottom-up proteomics, accurate molecular mass measurement by FTICR-MS, and selected MS/MS ion monitoring.</title>
        <authorList>
            <person name="Carrera M."/>
            <person name="Canas B."/>
            <person name="Vazquez J."/>
            <person name="Gallardo J.M."/>
        </authorList>
    </citation>
    <scope>PROTEIN SEQUENCE</scope>
    <scope>MASS SPECTROMETRY</scope>
    <scope>ACETYLATION AT ALA-1</scope>
    <source>
        <tissue evidence="6">Muscle</tissue>
    </source>
</reference>
<dbReference type="SMR" id="P86748"/>
<dbReference type="iPTMnet" id="P86748"/>
<dbReference type="GO" id="GO:0005737">
    <property type="term" value="C:cytoplasm"/>
    <property type="evidence" value="ECO:0007669"/>
    <property type="project" value="TreeGrafter"/>
</dbReference>
<dbReference type="GO" id="GO:0005509">
    <property type="term" value="F:calcium ion binding"/>
    <property type="evidence" value="ECO:0007669"/>
    <property type="project" value="InterPro"/>
</dbReference>
<dbReference type="CDD" id="cd16255">
    <property type="entry name" value="EFh_parvalbumin_beta"/>
    <property type="match status" value="1"/>
</dbReference>
<dbReference type="FunFam" id="1.10.238.10:FF:000060">
    <property type="entry name" value="Parvalbumin, thymic"/>
    <property type="match status" value="1"/>
</dbReference>
<dbReference type="Gene3D" id="1.10.238.10">
    <property type="entry name" value="EF-hand"/>
    <property type="match status" value="1"/>
</dbReference>
<dbReference type="InterPro" id="IPR011992">
    <property type="entry name" value="EF-hand-dom_pair"/>
</dbReference>
<dbReference type="InterPro" id="IPR018247">
    <property type="entry name" value="EF_Hand_1_Ca_BS"/>
</dbReference>
<dbReference type="InterPro" id="IPR002048">
    <property type="entry name" value="EF_hand_dom"/>
</dbReference>
<dbReference type="InterPro" id="IPR008080">
    <property type="entry name" value="Parvalbumin"/>
</dbReference>
<dbReference type="PANTHER" id="PTHR11653:SF12">
    <property type="entry name" value="PARVALBUMIN"/>
    <property type="match status" value="1"/>
</dbReference>
<dbReference type="PANTHER" id="PTHR11653">
    <property type="entry name" value="PARVALBUMIN ALPHA"/>
    <property type="match status" value="1"/>
</dbReference>
<dbReference type="Pfam" id="PF13499">
    <property type="entry name" value="EF-hand_7"/>
    <property type="match status" value="1"/>
</dbReference>
<dbReference type="PRINTS" id="PR01697">
    <property type="entry name" value="PARVALBUMIN"/>
</dbReference>
<dbReference type="SMART" id="SM00054">
    <property type="entry name" value="EFh"/>
    <property type="match status" value="2"/>
</dbReference>
<dbReference type="SUPFAM" id="SSF47473">
    <property type="entry name" value="EF-hand"/>
    <property type="match status" value="1"/>
</dbReference>
<dbReference type="PROSITE" id="PS00018">
    <property type="entry name" value="EF_HAND_1"/>
    <property type="match status" value="2"/>
</dbReference>
<dbReference type="PROSITE" id="PS50222">
    <property type="entry name" value="EF_HAND_2"/>
    <property type="match status" value="2"/>
</dbReference>
<proteinExistence type="evidence at protein level"/>
<feature type="chain" id="PRO_0000399407" description="Parvalbumin beta 3">
    <location>
        <begin position="1"/>
        <end position="108"/>
    </location>
</feature>
<feature type="domain" description="EF-hand 1" evidence="5">
    <location>
        <begin position="38"/>
        <end position="73"/>
    </location>
</feature>
<feature type="domain" description="EF-hand 2" evidence="5">
    <location>
        <begin position="77"/>
        <end position="108"/>
    </location>
</feature>
<feature type="binding site" evidence="1 5">
    <location>
        <position position="51"/>
    </location>
    <ligand>
        <name>Ca(2+)</name>
        <dbReference type="ChEBI" id="CHEBI:29108"/>
        <label>1</label>
    </ligand>
</feature>
<feature type="binding site" evidence="1 5">
    <location>
        <position position="53"/>
    </location>
    <ligand>
        <name>Ca(2+)</name>
        <dbReference type="ChEBI" id="CHEBI:29108"/>
        <label>1</label>
    </ligand>
</feature>
<feature type="binding site" evidence="1 5">
    <location>
        <position position="55"/>
    </location>
    <ligand>
        <name>Ca(2+)</name>
        <dbReference type="ChEBI" id="CHEBI:29108"/>
        <label>1</label>
    </ligand>
</feature>
<feature type="binding site" evidence="1">
    <location>
        <position position="57"/>
    </location>
    <ligand>
        <name>Ca(2+)</name>
        <dbReference type="ChEBI" id="CHEBI:29108"/>
        <label>1</label>
    </ligand>
</feature>
<feature type="binding site" evidence="1">
    <location>
        <position position="59"/>
    </location>
    <ligand>
        <name>Ca(2+)</name>
        <dbReference type="ChEBI" id="CHEBI:29108"/>
        <label>1</label>
    </ligand>
</feature>
<feature type="binding site" evidence="1 5">
    <location>
        <position position="62"/>
    </location>
    <ligand>
        <name>Ca(2+)</name>
        <dbReference type="ChEBI" id="CHEBI:29108"/>
        <label>1</label>
    </ligand>
</feature>
<feature type="binding site" evidence="1 5">
    <location>
        <position position="90"/>
    </location>
    <ligand>
        <name>Ca(2+)</name>
        <dbReference type="ChEBI" id="CHEBI:29108"/>
        <label>2</label>
    </ligand>
</feature>
<feature type="binding site" evidence="1 5">
    <location>
        <position position="92"/>
    </location>
    <ligand>
        <name>Ca(2+)</name>
        <dbReference type="ChEBI" id="CHEBI:29108"/>
        <label>2</label>
    </ligand>
</feature>
<feature type="binding site" evidence="1 5">
    <location>
        <position position="94"/>
    </location>
    <ligand>
        <name>Ca(2+)</name>
        <dbReference type="ChEBI" id="CHEBI:29108"/>
        <label>2</label>
    </ligand>
</feature>
<feature type="binding site" evidence="1">
    <location>
        <position position="96"/>
    </location>
    <ligand>
        <name>Ca(2+)</name>
        <dbReference type="ChEBI" id="CHEBI:29108"/>
        <label>2</label>
    </ligand>
</feature>
<feature type="binding site" evidence="1 5">
    <location>
        <position position="101"/>
    </location>
    <ligand>
        <name>Ca(2+)</name>
        <dbReference type="ChEBI" id="CHEBI:29108"/>
        <label>2</label>
    </ligand>
</feature>
<feature type="modified residue" description="N-acetylalanine" evidence="6">
    <location>
        <position position="1"/>
    </location>
</feature>
<feature type="unsure residue" description="I or L" evidence="6">
    <location>
        <position position="5"/>
    </location>
</feature>
<feature type="unsure residue" description="L or I" evidence="6">
    <location>
        <position position="6"/>
    </location>
</feature>
<feature type="unsure residue" description="I or L" evidence="6">
    <location>
        <position position="11"/>
    </location>
</feature>
<feature type="unsure residue" description="L or I" evidence="6">
    <location>
        <position position="15"/>
    </location>
</feature>
<feature type="unsure residue" description="K or Q" evidence="6">
    <location>
        <position position="16"/>
    </location>
</feature>
<feature type="unsure residue" description="K or Q" evidence="6">
    <location>
        <position position="27"/>
    </location>
</feature>
<feature type="unsure residue" description="K or Q" evidence="6">
    <location>
        <position position="32"/>
    </location>
</feature>
<feature type="unsure residue" description="L or I" evidence="6">
    <location>
        <position position="35"/>
    </location>
</feature>
<feature type="unsure residue" description="K or Q" evidence="6">
    <location>
        <position position="38"/>
    </location>
</feature>
<feature type="unsure residue" description="I or L" evidence="6">
    <location>
        <position position="43"/>
    </location>
</feature>
<feature type="unsure residue" description="K or Q" evidence="6">
    <location>
        <position position="44"/>
    </location>
</feature>
<feature type="unsure residue" description="K or Q" evidence="6">
    <location>
        <position position="45"/>
    </location>
</feature>
<feature type="unsure residue" description="I or L" evidence="6">
    <location>
        <position position="50"/>
    </location>
</feature>
<feature type="unsure residue" description="Q or K" evidence="6">
    <location>
        <position position="52"/>
    </location>
</feature>
<feature type="unsure residue" description="K or Q" evidence="6">
    <location>
        <position position="54"/>
    </location>
</feature>
<feature type="unsure residue" description="I or L" evidence="6">
    <location>
        <position position="58"/>
    </location>
</feature>
<feature type="unsure residue" description="L or I" evidence="6">
    <location>
        <position position="63"/>
    </location>
</feature>
<feature type="unsure residue" description="K or Q" evidence="6">
    <location>
        <position position="64"/>
    </location>
</feature>
<feature type="unsure residue" description="L or I" evidence="6">
    <location>
        <position position="65"/>
    </location>
</feature>
<feature type="unsure residue" description="L or I" evidence="6">
    <location>
        <position position="67"/>
    </location>
</feature>
<feature type="unsure residue" description="Q or K" evidence="6">
    <location>
        <position position="68"/>
    </location>
</feature>
<feature type="unsure residue" description="L or I" evidence="6">
    <location>
        <position position="77"/>
    </location>
</feature>
<feature type="unsure residue" description="K or Q" evidence="6">
    <location>
        <position position="83"/>
    </location>
</feature>
<feature type="unsure residue" description="L or I" evidence="6">
    <location>
        <position position="86"/>
    </location>
</feature>
<feature type="unsure residue" description="K or Q" evidence="6">
    <location>
        <position position="87"/>
    </location>
</feature>
<feature type="unsure residue" description="I or L" evidence="6">
    <location>
        <position position="97"/>
    </location>
</feature>
<feature type="unsure residue" description="L or I" evidence="6">
    <location>
        <position position="105"/>
    </location>
</feature>
<feature type="unsure residue" description="K or Q" evidence="6">
    <location>
        <position position="107"/>
    </location>
</feature>